<gene>
    <name type="primary">HMGCR</name>
</gene>
<name>HMDH_PONAB</name>
<evidence type="ECO:0000250" key="1">
    <source>
        <dbReference type="UniProtKB" id="P00347"/>
    </source>
</evidence>
<evidence type="ECO:0000250" key="2">
    <source>
        <dbReference type="UniProtKB" id="P04035"/>
    </source>
</evidence>
<evidence type="ECO:0000250" key="3">
    <source>
        <dbReference type="UniProtKB" id="P51639"/>
    </source>
</evidence>
<evidence type="ECO:0000255" key="4"/>
<evidence type="ECO:0000255" key="5">
    <source>
        <dbReference type="PROSITE-ProRule" id="PRU00199"/>
    </source>
</evidence>
<evidence type="ECO:0000255" key="6">
    <source>
        <dbReference type="PROSITE-ProRule" id="PRU10003"/>
    </source>
</evidence>
<evidence type="ECO:0000305" key="7"/>
<keyword id="KW-0152">Cholesterol biosynthesis</keyword>
<keyword id="KW-0153">Cholesterol metabolism</keyword>
<keyword id="KW-0256">Endoplasmic reticulum</keyword>
<keyword id="KW-0325">Glycoprotein</keyword>
<keyword id="KW-1017">Isopeptide bond</keyword>
<keyword id="KW-0444">Lipid biosynthesis</keyword>
<keyword id="KW-0443">Lipid metabolism</keyword>
<keyword id="KW-0472">Membrane</keyword>
<keyword id="KW-0521">NADP</keyword>
<keyword id="KW-0560">Oxidoreductase</keyword>
<keyword id="KW-0576">Peroxisome</keyword>
<keyword id="KW-0597">Phosphoprotein</keyword>
<keyword id="KW-1185">Reference proteome</keyword>
<keyword id="KW-0752">Steroid biosynthesis</keyword>
<keyword id="KW-0753">Steroid metabolism</keyword>
<keyword id="KW-0756">Sterol biosynthesis</keyword>
<keyword id="KW-1207">Sterol metabolism</keyword>
<keyword id="KW-0812">Transmembrane</keyword>
<keyword id="KW-1133">Transmembrane helix</keyword>
<keyword id="KW-0832">Ubl conjugation</keyword>
<comment type="function">
    <text evidence="2">Catalyzes the conversion of (3S)-hydroxy-3-methylglutaryl-CoA (HMG-CoA) to mevalonic acid, the rate-limiting step in the synthesis of cholesterol and other isoprenoids, thus plays a critical role in cellular cholesterol homeostasis.</text>
</comment>
<comment type="catalytic activity">
    <reaction evidence="2">
        <text>(R)-mevalonate + 2 NADP(+) + CoA = (3S)-3-hydroxy-3-methylglutaryl-CoA + 2 NADPH + 2 H(+)</text>
        <dbReference type="Rhea" id="RHEA:15989"/>
        <dbReference type="ChEBI" id="CHEBI:15378"/>
        <dbReference type="ChEBI" id="CHEBI:36464"/>
        <dbReference type="ChEBI" id="CHEBI:43074"/>
        <dbReference type="ChEBI" id="CHEBI:57287"/>
        <dbReference type="ChEBI" id="CHEBI:57783"/>
        <dbReference type="ChEBI" id="CHEBI:58349"/>
        <dbReference type="EC" id="1.1.1.34"/>
    </reaction>
    <physiologicalReaction direction="right-to-left" evidence="2">
        <dbReference type="Rhea" id="RHEA:15991"/>
    </physiologicalReaction>
</comment>
<comment type="activity regulation">
    <text evidence="1 2">Regulated by a negative feedback mechanism through sterols and non-sterol metabolites derived from mevalonate (By similarity). Phosphorylation at Ser-872 down-regulates the catalytic activity (By similarity).</text>
</comment>
<comment type="pathway">
    <text>Metabolic intermediate biosynthesis; (R)-mevalonate biosynthesis; (R)-mevalonate from acetyl-CoA: step 3/3.</text>
</comment>
<comment type="subunit">
    <text evidence="2">Homotetramer. Homodimer. Interacts (via its SSD) with INSIG1; the interaction, accelerated by sterols, leads to the recruitment of HMGCR to AMFR/gp78 for its ubiquitination by the sterol-mediated ERAD pathway. Interacts with UBIAD1.</text>
</comment>
<comment type="subcellular location">
    <subcellularLocation>
        <location evidence="2">Endoplasmic reticulum membrane</location>
        <topology evidence="1">Multi-pass membrane protein</topology>
    </subcellularLocation>
    <subcellularLocation>
        <location evidence="2">Peroxisome membrane</location>
        <topology evidence="1">Multi-pass membrane protein</topology>
    </subcellularLocation>
</comment>
<comment type="PTM">
    <text evidence="2">Undergoes sterol-mediated ubiquitination and ER-associated degradation (ERAD). Accumulation of sterols in the endoplasmic reticulum (ER) membrane, triggers binding of the reductase to the ER membrane protein INSIG1 or INSIG2. The INSIG1 binding leads to the recruitment of the ubiquitin ligase, AMFR/gp78, RNF139 or RNF145, initiating ubiquitination of the reductase. The ubiquitinated reductase is then extracted from the ER membrane and delivered to cytosolic 26S proteosomes by a mechanism probably mediated by the ATPase Valosin-containing protein VCP/p97. The INSIG2-binding leads to the recruitment of the ubiquitin ligase RNF139, initiating ubiquitination of the reductase. Lys-248 is the main site of ubiquitination. Ubiquitination is enhanced by the presence of a geranylgeranylated protein.</text>
</comment>
<comment type="PTM">
    <text evidence="2">N-glycosylated. Deglycosylated by NGLY1 on release from the endoplasmic reticulum (ER) in a sterol-mediated manner.</text>
</comment>
<comment type="PTM">
    <text evidence="1">Phosphorylated. Phosphorylation at Ser-872 reduces the catalytic activity.</text>
</comment>
<comment type="similarity">
    <text evidence="7">Belongs to the HMG-CoA reductase family.</text>
</comment>
<protein>
    <recommendedName>
        <fullName>3-hydroxy-3-methylglutaryl-coenzyme A reductase</fullName>
        <shortName>HMG-CoA reductase</shortName>
        <ecNumber evidence="2">1.1.1.34</ecNumber>
    </recommendedName>
</protein>
<dbReference type="EC" id="1.1.1.34" evidence="2"/>
<dbReference type="EMBL" id="CR860454">
    <property type="protein sequence ID" value="CAH92577.1"/>
    <property type="molecule type" value="mRNA"/>
</dbReference>
<dbReference type="RefSeq" id="NP_001126511.1">
    <property type="nucleotide sequence ID" value="NM_001133039.1"/>
</dbReference>
<dbReference type="SMR" id="Q5R6N3"/>
<dbReference type="FunCoup" id="Q5R6N3">
    <property type="interactions" value="1454"/>
</dbReference>
<dbReference type="STRING" id="9601.ENSPPYP00000017394"/>
<dbReference type="GlyCosmos" id="Q5R6N3">
    <property type="glycosylation" value="2 sites, No reported glycans"/>
</dbReference>
<dbReference type="GeneID" id="100173499"/>
<dbReference type="KEGG" id="pon:100173499"/>
<dbReference type="CTD" id="3156"/>
<dbReference type="eggNOG" id="KOG2480">
    <property type="taxonomic scope" value="Eukaryota"/>
</dbReference>
<dbReference type="InParanoid" id="Q5R6N3"/>
<dbReference type="OrthoDB" id="310654at2759"/>
<dbReference type="UniPathway" id="UPA00058">
    <property type="reaction ID" value="UER00103"/>
</dbReference>
<dbReference type="Proteomes" id="UP000001595">
    <property type="component" value="Unplaced"/>
</dbReference>
<dbReference type="GO" id="GO:0005783">
    <property type="term" value="C:endoplasmic reticulum"/>
    <property type="evidence" value="ECO:0000250"/>
    <property type="project" value="UniProtKB"/>
</dbReference>
<dbReference type="GO" id="GO:0005789">
    <property type="term" value="C:endoplasmic reticulum membrane"/>
    <property type="evidence" value="ECO:0007669"/>
    <property type="project" value="UniProtKB-SubCell"/>
</dbReference>
<dbReference type="GO" id="GO:0005778">
    <property type="term" value="C:peroxisomal membrane"/>
    <property type="evidence" value="ECO:0000250"/>
    <property type="project" value="UniProtKB"/>
</dbReference>
<dbReference type="GO" id="GO:0004420">
    <property type="term" value="F:hydroxymethylglutaryl-CoA reductase (NADPH) activity"/>
    <property type="evidence" value="ECO:0007669"/>
    <property type="project" value="UniProtKB-EC"/>
</dbReference>
<dbReference type="GO" id="GO:0050661">
    <property type="term" value="F:NADP binding"/>
    <property type="evidence" value="ECO:0007669"/>
    <property type="project" value="InterPro"/>
</dbReference>
<dbReference type="GO" id="GO:0006695">
    <property type="term" value="P:cholesterol biosynthetic process"/>
    <property type="evidence" value="ECO:0007669"/>
    <property type="project" value="UniProtKB-KW"/>
</dbReference>
<dbReference type="GO" id="GO:0015936">
    <property type="term" value="P:coenzyme A metabolic process"/>
    <property type="evidence" value="ECO:0007669"/>
    <property type="project" value="InterPro"/>
</dbReference>
<dbReference type="GO" id="GO:0008299">
    <property type="term" value="P:isoprenoid biosynthetic process"/>
    <property type="evidence" value="ECO:0007669"/>
    <property type="project" value="InterPro"/>
</dbReference>
<dbReference type="CDD" id="cd00643">
    <property type="entry name" value="HMG-CoA_reductase_classI"/>
    <property type="match status" value="1"/>
</dbReference>
<dbReference type="FunFam" id="1.10.3270.10:FF:000001">
    <property type="entry name" value="3-hydroxy-3-methylglutaryl coenzyme A reductase"/>
    <property type="match status" value="1"/>
</dbReference>
<dbReference type="FunFam" id="3.30.70.420:FF:000001">
    <property type="entry name" value="3-hydroxy-3-methylglutaryl coenzyme A reductase"/>
    <property type="match status" value="1"/>
</dbReference>
<dbReference type="FunFam" id="3.90.770.10:FF:000002">
    <property type="entry name" value="3-hydroxy-3-methylglutaryl coenzyme A reductase"/>
    <property type="match status" value="1"/>
</dbReference>
<dbReference type="Gene3D" id="3.90.770.10">
    <property type="entry name" value="3-hydroxy-3-methylglutaryl-coenzyme A Reductase, Chain A, domain 2"/>
    <property type="match status" value="1"/>
</dbReference>
<dbReference type="Gene3D" id="1.10.3270.10">
    <property type="entry name" value="HMGR, N-terminal domain"/>
    <property type="match status" value="1"/>
</dbReference>
<dbReference type="Gene3D" id="3.30.70.420">
    <property type="entry name" value="Hydroxymethylglutaryl-CoA reductase, class I/II, NAD/NADP-binding domain"/>
    <property type="match status" value="1"/>
</dbReference>
<dbReference type="InterPro" id="IPR002202">
    <property type="entry name" value="HMG_CoA_Rdtase"/>
</dbReference>
<dbReference type="InterPro" id="IPR023074">
    <property type="entry name" value="HMG_CoA_Rdtase_cat_sf"/>
</dbReference>
<dbReference type="InterPro" id="IPR023076">
    <property type="entry name" value="HMG_CoA_Rdtase_CS"/>
</dbReference>
<dbReference type="InterPro" id="IPR004554">
    <property type="entry name" value="HMG_CoA_Rdtase_eu_arc"/>
</dbReference>
<dbReference type="InterPro" id="IPR004816">
    <property type="entry name" value="HMG_CoA_Rdtase_metazoan"/>
</dbReference>
<dbReference type="InterPro" id="IPR023282">
    <property type="entry name" value="HMG_CoA_Rdtase_N"/>
</dbReference>
<dbReference type="InterPro" id="IPR009023">
    <property type="entry name" value="HMG_CoA_Rdtase_NAD(P)-bd_sf"/>
</dbReference>
<dbReference type="InterPro" id="IPR009029">
    <property type="entry name" value="HMG_CoA_Rdtase_sub-bd_dom_sf"/>
</dbReference>
<dbReference type="InterPro" id="IPR053958">
    <property type="entry name" value="HMGCR/SNAP/NPC1-like_SSD"/>
</dbReference>
<dbReference type="InterPro" id="IPR000731">
    <property type="entry name" value="SSD"/>
</dbReference>
<dbReference type="NCBIfam" id="TIGR00920">
    <property type="entry name" value="2A060605"/>
    <property type="match status" value="1"/>
</dbReference>
<dbReference type="NCBIfam" id="TIGR00533">
    <property type="entry name" value="HMG_CoA_R_NADP"/>
    <property type="match status" value="1"/>
</dbReference>
<dbReference type="PANTHER" id="PTHR10572">
    <property type="entry name" value="3-HYDROXY-3-METHYLGLUTARYL-COENZYME A REDUCTASE"/>
    <property type="match status" value="1"/>
</dbReference>
<dbReference type="PANTHER" id="PTHR10572:SF24">
    <property type="entry name" value="3-HYDROXY-3-METHYLGLUTARYL-COENZYME A REDUCTASE"/>
    <property type="match status" value="1"/>
</dbReference>
<dbReference type="Pfam" id="PF00368">
    <property type="entry name" value="HMG-CoA_red"/>
    <property type="match status" value="1"/>
</dbReference>
<dbReference type="Pfam" id="PF12349">
    <property type="entry name" value="Sterol-sensing"/>
    <property type="match status" value="1"/>
</dbReference>
<dbReference type="PRINTS" id="PR00071">
    <property type="entry name" value="HMGCOARDTASE"/>
</dbReference>
<dbReference type="SUPFAM" id="SSF82866">
    <property type="entry name" value="Multidrug efflux transporter AcrB transmembrane domain"/>
    <property type="match status" value="1"/>
</dbReference>
<dbReference type="SUPFAM" id="SSF55035">
    <property type="entry name" value="NAD-binding domain of HMG-CoA reductase"/>
    <property type="match status" value="1"/>
</dbReference>
<dbReference type="SUPFAM" id="SSF56542">
    <property type="entry name" value="Substrate-binding domain of HMG-CoA reductase"/>
    <property type="match status" value="1"/>
</dbReference>
<dbReference type="PROSITE" id="PS00066">
    <property type="entry name" value="HMG_COA_REDUCTASE_1"/>
    <property type="match status" value="1"/>
</dbReference>
<dbReference type="PROSITE" id="PS00318">
    <property type="entry name" value="HMG_COA_REDUCTASE_2"/>
    <property type="match status" value="1"/>
</dbReference>
<dbReference type="PROSITE" id="PS01192">
    <property type="entry name" value="HMG_COA_REDUCTASE_3"/>
    <property type="match status" value="1"/>
</dbReference>
<dbReference type="PROSITE" id="PS50065">
    <property type="entry name" value="HMG_COA_REDUCTASE_4"/>
    <property type="match status" value="1"/>
</dbReference>
<dbReference type="PROSITE" id="PS50156">
    <property type="entry name" value="SSD"/>
    <property type="match status" value="1"/>
</dbReference>
<proteinExistence type="evidence at transcript level"/>
<feature type="chain" id="PRO_0000114422" description="3-hydroxy-3-methylglutaryl-coenzyme A reductase">
    <location>
        <begin position="1"/>
        <end position="888"/>
    </location>
</feature>
<feature type="topological domain" description="Cytoplasmic" evidence="1">
    <location>
        <begin position="1"/>
        <end position="9"/>
    </location>
</feature>
<feature type="transmembrane region" description="Helical" evidence="1">
    <location>
        <begin position="10"/>
        <end position="39"/>
    </location>
</feature>
<feature type="topological domain" description="Lumenal" evidence="1">
    <location>
        <begin position="40"/>
        <end position="56"/>
    </location>
</feature>
<feature type="transmembrane region" description="Helical" evidence="1">
    <location>
        <begin position="57"/>
        <end position="78"/>
    </location>
</feature>
<feature type="topological domain" description="Cytoplasmic" evidence="1">
    <location>
        <begin position="79"/>
        <end position="89"/>
    </location>
</feature>
<feature type="transmembrane region" description="Helical" evidence="1">
    <location>
        <begin position="90"/>
        <end position="114"/>
    </location>
</feature>
<feature type="topological domain" description="Lumenal" evidence="1">
    <location>
        <begin position="115"/>
        <end position="123"/>
    </location>
</feature>
<feature type="transmembrane region" description="Helical" evidence="1">
    <location>
        <begin position="124"/>
        <end position="149"/>
    </location>
</feature>
<feature type="topological domain" description="Cytoplasmic" evidence="1">
    <location>
        <begin position="150"/>
        <end position="159"/>
    </location>
</feature>
<feature type="transmembrane region" description="Helical" evidence="1">
    <location>
        <begin position="160"/>
        <end position="187"/>
    </location>
</feature>
<feature type="topological domain" description="Lumenal" evidence="1">
    <location>
        <begin position="188"/>
        <end position="191"/>
    </location>
</feature>
<feature type="transmembrane region" description="Helical" evidence="1">
    <location>
        <begin position="192"/>
        <end position="220"/>
    </location>
</feature>
<feature type="topological domain" description="Cytoplasmic" evidence="1">
    <location>
        <begin position="221"/>
        <end position="248"/>
    </location>
</feature>
<feature type="transmembrane region" description="Helical" evidence="1">
    <location>
        <begin position="249"/>
        <end position="275"/>
    </location>
</feature>
<feature type="topological domain" description="Lumenal" evidence="1">
    <location>
        <begin position="276"/>
        <end position="314"/>
    </location>
</feature>
<feature type="transmembrane region" description="Helical" evidence="1">
    <location>
        <begin position="315"/>
        <end position="339"/>
    </location>
</feature>
<feature type="topological domain" description="Cytoplasmic" evidence="1">
    <location>
        <begin position="340"/>
        <end position="888"/>
    </location>
</feature>
<feature type="domain" description="SSD" evidence="5">
    <location>
        <begin position="61"/>
        <end position="218"/>
    </location>
</feature>
<feature type="short sequence motif" description="INSIG-binding motif" evidence="2">
    <location>
        <begin position="75"/>
        <end position="78"/>
    </location>
</feature>
<feature type="active site" description="Charge relay system" evidence="2">
    <location>
        <position position="559"/>
    </location>
</feature>
<feature type="active site" description="Charge relay system" evidence="2">
    <location>
        <position position="691"/>
    </location>
</feature>
<feature type="active site" description="Charge relay system" evidence="2">
    <location>
        <position position="767"/>
    </location>
</feature>
<feature type="active site" description="Proton donor" evidence="6">
    <location>
        <position position="866"/>
    </location>
</feature>
<feature type="modified residue" description="Phosphoserine; by AMPK" evidence="3">
    <location>
        <position position="872"/>
    </location>
</feature>
<feature type="glycosylation site" description="N-linked (GlcNAc...) asparagine" evidence="4">
    <location>
        <position position="281"/>
    </location>
</feature>
<feature type="glycosylation site" description="N-linked (GlcNAc...) asparagine" evidence="4">
    <location>
        <position position="296"/>
    </location>
</feature>
<feature type="cross-link" description="Glycyl lysine isopeptide (Lys-Gly) (interchain with G-Cter in ubiquitin)" evidence="1">
    <location>
        <position position="89"/>
    </location>
</feature>
<feature type="cross-link" description="Glycyl lysine isopeptide (Lys-Gly) (interchain with G-Cter in ubiquitin)" evidence="1">
    <location>
        <position position="248"/>
    </location>
</feature>
<accession>Q5R6N3</accession>
<organism>
    <name type="scientific">Pongo abelii</name>
    <name type="common">Sumatran orangutan</name>
    <name type="synonym">Pongo pygmaeus abelii</name>
    <dbReference type="NCBI Taxonomy" id="9601"/>
    <lineage>
        <taxon>Eukaryota</taxon>
        <taxon>Metazoa</taxon>
        <taxon>Chordata</taxon>
        <taxon>Craniata</taxon>
        <taxon>Vertebrata</taxon>
        <taxon>Euteleostomi</taxon>
        <taxon>Mammalia</taxon>
        <taxon>Eutheria</taxon>
        <taxon>Euarchontoglires</taxon>
        <taxon>Primates</taxon>
        <taxon>Haplorrhini</taxon>
        <taxon>Catarrhini</taxon>
        <taxon>Hominidae</taxon>
        <taxon>Pongo</taxon>
    </lineage>
</organism>
<reference key="1">
    <citation type="submission" date="2004-11" db="EMBL/GenBank/DDBJ databases">
        <authorList>
            <consortium name="The German cDNA consortium"/>
        </authorList>
    </citation>
    <scope>NUCLEOTIDE SEQUENCE [LARGE SCALE MRNA]</scope>
    <source>
        <tissue>Brain cortex</tissue>
    </source>
</reference>
<sequence length="888" mass="97389">MLSRLFRMHGLFVASHPWEVIVGTVTLTICMMSMNMFTGNNKICGWNYECPKFEEDVLSSDIIILTITRCIAILYIYFQFQNLRQLGSKYILGIAGLFTIFSSFVFSTVVIHFLDKELTGLNEALPFFLLLIDLSRASTLAKFALSSNSQDEVRENIARGMAILGPTFTLDALVECLVIGVGTMSGVRQLEIMCCFGCMSVLANYFVFMTFFPACVSLVLELSRESREGRPIWLLSHFARVLEEEENKPNPVTQRVKMIMSLGLVLVHAHSRWIADPSPQNSTADTSKVSLGLDENVSKRIEPSVSLWQFYLSKMISMDIEQVITLSLALLLAVKYIFFEQTETESTLSLKNPITSPVVTQKKVPDDCCRREPMLVRNNQKCDSVEEETGINRERKVEVIKPLVAETDTPNRATFVVGNSSLLDTSSVLVTQEPEIELPREPRPNEECLQILGNAEKGAKFLSDAEIIQLVIAKHIPAYKLETLMETHERGVSIRRQLLSKKLSEPSSLQYLPYRDYNYSLVMGACCENVIGYMPIPVGVAGPLCLDGKEFQVPMATTEGCLVASTNRGCRAIGLGGGASSRVLADGMTRGPVVRLPRACDSAEVKAWLETSEGFAVIKEAFDSTSRFARLRKLHTSIAGRNLYIRFQSRSGDAMGMNMISKGTEKALSKLHEYFPEMQILAVSGNYCTDKKPAAINWIEGRGKSAVCEAVIPAKVVREVLKTTTEAMIEVNINKNLVGSAMAGSIGGYNAHAANIVTAIYIACGQDAAQNVGSSNCITLMEASGPTNEDLYISCTMPSIEIGTVGGGTNLLPQQACLQMLGVQGACKDNPGENARQLARIVCGTVMAGELSLMAALAAGHLVKSHMIHNRSKINLQDLQGACTKKTA</sequence>